<keyword id="KW-0067">ATP-binding</keyword>
<keyword id="KW-0963">Cytoplasm</keyword>
<keyword id="KW-0275">Fatty acid biosynthesis</keyword>
<keyword id="KW-0276">Fatty acid metabolism</keyword>
<keyword id="KW-0444">Lipid biosynthesis</keyword>
<keyword id="KW-0443">Lipid metabolism</keyword>
<keyword id="KW-0547">Nucleotide-binding</keyword>
<keyword id="KW-0808">Transferase</keyword>
<name>ACCA_BACC4</name>
<feature type="chain" id="PRO_1000134458" description="Acetyl-coenzyme A carboxylase carboxyl transferase subunit alpha">
    <location>
        <begin position="1"/>
        <end position="324"/>
    </location>
</feature>
<feature type="domain" description="CoA carboxyltransferase C-terminal" evidence="2">
    <location>
        <begin position="37"/>
        <end position="291"/>
    </location>
</feature>
<proteinExistence type="inferred from homology"/>
<dbReference type="EC" id="2.1.3.15" evidence="1"/>
<dbReference type="EMBL" id="CP001176">
    <property type="protein sequence ID" value="ACK59254.1"/>
    <property type="molecule type" value="Genomic_DNA"/>
</dbReference>
<dbReference type="RefSeq" id="WP_000818805.1">
    <property type="nucleotide sequence ID" value="NC_011725.1"/>
</dbReference>
<dbReference type="SMR" id="B7HFB4"/>
<dbReference type="KEGG" id="bcb:BCB4264_A4710"/>
<dbReference type="HOGENOM" id="CLU_015486_0_2_9"/>
<dbReference type="UniPathway" id="UPA00655">
    <property type="reaction ID" value="UER00711"/>
</dbReference>
<dbReference type="Proteomes" id="UP000007096">
    <property type="component" value="Chromosome"/>
</dbReference>
<dbReference type="GO" id="GO:0009317">
    <property type="term" value="C:acetyl-CoA carboxylase complex"/>
    <property type="evidence" value="ECO:0007669"/>
    <property type="project" value="InterPro"/>
</dbReference>
<dbReference type="GO" id="GO:0003989">
    <property type="term" value="F:acetyl-CoA carboxylase activity"/>
    <property type="evidence" value="ECO:0007669"/>
    <property type="project" value="InterPro"/>
</dbReference>
<dbReference type="GO" id="GO:0005524">
    <property type="term" value="F:ATP binding"/>
    <property type="evidence" value="ECO:0007669"/>
    <property type="project" value="UniProtKB-KW"/>
</dbReference>
<dbReference type="GO" id="GO:0016743">
    <property type="term" value="F:carboxyl- or carbamoyltransferase activity"/>
    <property type="evidence" value="ECO:0007669"/>
    <property type="project" value="UniProtKB-UniRule"/>
</dbReference>
<dbReference type="GO" id="GO:0006633">
    <property type="term" value="P:fatty acid biosynthetic process"/>
    <property type="evidence" value="ECO:0007669"/>
    <property type="project" value="UniProtKB-KW"/>
</dbReference>
<dbReference type="GO" id="GO:2001295">
    <property type="term" value="P:malonyl-CoA biosynthetic process"/>
    <property type="evidence" value="ECO:0007669"/>
    <property type="project" value="UniProtKB-UniRule"/>
</dbReference>
<dbReference type="Gene3D" id="3.90.226.10">
    <property type="entry name" value="2-enoyl-CoA Hydratase, Chain A, domain 1"/>
    <property type="match status" value="1"/>
</dbReference>
<dbReference type="HAMAP" id="MF_00823">
    <property type="entry name" value="AcetylCoA_CT_alpha"/>
    <property type="match status" value="1"/>
</dbReference>
<dbReference type="InterPro" id="IPR001095">
    <property type="entry name" value="Acetyl_CoA_COase_a_su"/>
</dbReference>
<dbReference type="InterPro" id="IPR029045">
    <property type="entry name" value="ClpP/crotonase-like_dom_sf"/>
</dbReference>
<dbReference type="InterPro" id="IPR011763">
    <property type="entry name" value="COA_CT_C"/>
</dbReference>
<dbReference type="NCBIfam" id="TIGR00513">
    <property type="entry name" value="accA"/>
    <property type="match status" value="1"/>
</dbReference>
<dbReference type="NCBIfam" id="NF041504">
    <property type="entry name" value="AccA_sub"/>
    <property type="match status" value="1"/>
</dbReference>
<dbReference type="NCBIfam" id="NF004344">
    <property type="entry name" value="PRK05724.1"/>
    <property type="match status" value="1"/>
</dbReference>
<dbReference type="PANTHER" id="PTHR42853">
    <property type="entry name" value="ACETYL-COENZYME A CARBOXYLASE CARBOXYL TRANSFERASE SUBUNIT ALPHA"/>
    <property type="match status" value="1"/>
</dbReference>
<dbReference type="PANTHER" id="PTHR42853:SF3">
    <property type="entry name" value="ACETYL-COENZYME A CARBOXYLASE CARBOXYL TRANSFERASE SUBUNIT ALPHA, CHLOROPLASTIC"/>
    <property type="match status" value="1"/>
</dbReference>
<dbReference type="Pfam" id="PF03255">
    <property type="entry name" value="ACCA"/>
    <property type="match status" value="1"/>
</dbReference>
<dbReference type="PRINTS" id="PR01069">
    <property type="entry name" value="ACCCTRFRASEA"/>
</dbReference>
<dbReference type="SUPFAM" id="SSF52096">
    <property type="entry name" value="ClpP/crotonase"/>
    <property type="match status" value="1"/>
</dbReference>
<dbReference type="PROSITE" id="PS50989">
    <property type="entry name" value="COA_CT_CTER"/>
    <property type="match status" value="1"/>
</dbReference>
<protein>
    <recommendedName>
        <fullName evidence="1">Acetyl-coenzyme A carboxylase carboxyl transferase subunit alpha</fullName>
        <shortName evidence="1">ACCase subunit alpha</shortName>
        <shortName evidence="1">Acetyl-CoA carboxylase carboxyltransferase subunit alpha</shortName>
        <ecNumber evidence="1">2.1.3.15</ecNumber>
    </recommendedName>
</protein>
<gene>
    <name evidence="1" type="primary">accA</name>
    <name type="ordered locus">BCB4264_A4710</name>
</gene>
<organism>
    <name type="scientific">Bacillus cereus (strain B4264)</name>
    <dbReference type="NCBI Taxonomy" id="405532"/>
    <lineage>
        <taxon>Bacteria</taxon>
        <taxon>Bacillati</taxon>
        <taxon>Bacillota</taxon>
        <taxon>Bacilli</taxon>
        <taxon>Bacillales</taxon>
        <taxon>Bacillaceae</taxon>
        <taxon>Bacillus</taxon>
        <taxon>Bacillus cereus group</taxon>
    </lineage>
</organism>
<sequence length="324" mass="36466">MAELEFEKPVVELRNKIRELKDYTKNSQMDFSEEIRILEEKLENLEEDIYGNLKVWDRVQIARHAERPTTLDYIEHLFTDFFECHGDRLFGDDAAIVGGIAKYKGMPVTVIGHQRGKDTKENIRRNFGMPHPEGYRKALRLMKQAEKFNRPIICFIDTKGAYPGKAAEERGQSEAIARNLFEMAGLTVPVICIVIGEGGSGGALGLGVGDYIHMLENSTYSVITPEGAAAILWKDAGKAKEAAEAMKITAADLKELGVIDEIIPEARGGAHRNVLKQSENIDLMIRKTFEQLNGISKDELIEKRYEKYMKIGQVSFSNASIWIK</sequence>
<reference key="1">
    <citation type="submission" date="2008-10" db="EMBL/GenBank/DDBJ databases">
        <title>Genome sequence of Bacillus cereus B4264.</title>
        <authorList>
            <person name="Dodson R.J."/>
            <person name="Durkin A.S."/>
            <person name="Rosovitz M.J."/>
            <person name="Rasko D.A."/>
            <person name="Hoffmaster A."/>
            <person name="Ravel J."/>
            <person name="Sutton G."/>
        </authorList>
    </citation>
    <scope>NUCLEOTIDE SEQUENCE [LARGE SCALE GENOMIC DNA]</scope>
    <source>
        <strain>B4264</strain>
    </source>
</reference>
<evidence type="ECO:0000255" key="1">
    <source>
        <dbReference type="HAMAP-Rule" id="MF_00823"/>
    </source>
</evidence>
<evidence type="ECO:0000255" key="2">
    <source>
        <dbReference type="PROSITE-ProRule" id="PRU01137"/>
    </source>
</evidence>
<comment type="function">
    <text evidence="1">Component of the acetyl coenzyme A carboxylase (ACC) complex. First, biotin carboxylase catalyzes the carboxylation of biotin on its carrier protein (BCCP) and then the CO(2) group is transferred by the carboxyltransferase to acetyl-CoA to form malonyl-CoA.</text>
</comment>
<comment type="catalytic activity">
    <reaction evidence="1">
        <text>N(6)-carboxybiotinyl-L-lysyl-[protein] + acetyl-CoA = N(6)-biotinyl-L-lysyl-[protein] + malonyl-CoA</text>
        <dbReference type="Rhea" id="RHEA:54728"/>
        <dbReference type="Rhea" id="RHEA-COMP:10505"/>
        <dbReference type="Rhea" id="RHEA-COMP:10506"/>
        <dbReference type="ChEBI" id="CHEBI:57288"/>
        <dbReference type="ChEBI" id="CHEBI:57384"/>
        <dbReference type="ChEBI" id="CHEBI:83144"/>
        <dbReference type="ChEBI" id="CHEBI:83145"/>
        <dbReference type="EC" id="2.1.3.15"/>
    </reaction>
</comment>
<comment type="pathway">
    <text evidence="1">Lipid metabolism; malonyl-CoA biosynthesis; malonyl-CoA from acetyl-CoA: step 1/1.</text>
</comment>
<comment type="subunit">
    <text evidence="1">Acetyl-CoA carboxylase is a heterohexamer composed of biotin carboxyl carrier protein (AccB), biotin carboxylase (AccC) and two subunits each of ACCase subunit alpha (AccA) and ACCase subunit beta (AccD).</text>
</comment>
<comment type="subcellular location">
    <subcellularLocation>
        <location evidence="1">Cytoplasm</location>
    </subcellularLocation>
</comment>
<comment type="similarity">
    <text evidence="1">Belongs to the AccA family.</text>
</comment>
<accession>B7HFB4</accession>